<keyword id="KW-0521">NADP</keyword>
<keyword id="KW-0560">Oxidoreductase</keyword>
<organism>
    <name type="scientific">Mycolicibacterium vanbaalenii (strain DSM 7251 / JCM 13017 / BCRC 16820 / KCTC 9966 / NRRL B-24157 / PYR-1)</name>
    <name type="common">Mycobacterium vanbaalenii</name>
    <dbReference type="NCBI Taxonomy" id="350058"/>
    <lineage>
        <taxon>Bacteria</taxon>
        <taxon>Bacillati</taxon>
        <taxon>Actinomycetota</taxon>
        <taxon>Actinomycetes</taxon>
        <taxon>Mycobacteriales</taxon>
        <taxon>Mycobacteriaceae</taxon>
        <taxon>Mycolicibacterium</taxon>
    </lineage>
</organism>
<accession>A1T726</accession>
<name>Y2161_MYCVP</name>
<dbReference type="EC" id="1.1.1.-" evidence="1"/>
<dbReference type="EMBL" id="CP000511">
    <property type="protein sequence ID" value="ABM12976.1"/>
    <property type="molecule type" value="Genomic_DNA"/>
</dbReference>
<dbReference type="RefSeq" id="WP_011779390.1">
    <property type="nucleotide sequence ID" value="NZ_JACKSD010000001.1"/>
</dbReference>
<dbReference type="SMR" id="A1T726"/>
<dbReference type="STRING" id="350058.Mvan_2161"/>
<dbReference type="KEGG" id="mva:Mvan_2161"/>
<dbReference type="eggNOG" id="COG0656">
    <property type="taxonomic scope" value="Bacteria"/>
</dbReference>
<dbReference type="HOGENOM" id="CLU_023205_0_1_11"/>
<dbReference type="Proteomes" id="UP000009159">
    <property type="component" value="Chromosome"/>
</dbReference>
<dbReference type="GO" id="GO:0004033">
    <property type="term" value="F:aldo-keto reductase (NADPH) activity"/>
    <property type="evidence" value="ECO:0007669"/>
    <property type="project" value="TreeGrafter"/>
</dbReference>
<dbReference type="CDD" id="cd19134">
    <property type="entry name" value="AKR_AKR5H1"/>
    <property type="match status" value="1"/>
</dbReference>
<dbReference type="FunFam" id="3.20.20.100:FF:000015">
    <property type="entry name" value="Oxidoreductase, aldo/keto reductase family"/>
    <property type="match status" value="1"/>
</dbReference>
<dbReference type="Gene3D" id="3.20.20.100">
    <property type="entry name" value="NADP-dependent oxidoreductase domain"/>
    <property type="match status" value="1"/>
</dbReference>
<dbReference type="InterPro" id="IPR020471">
    <property type="entry name" value="AKR"/>
</dbReference>
<dbReference type="InterPro" id="IPR018170">
    <property type="entry name" value="Aldo/ket_reductase_CS"/>
</dbReference>
<dbReference type="InterPro" id="IPR023210">
    <property type="entry name" value="NADP_OxRdtase_dom"/>
</dbReference>
<dbReference type="InterPro" id="IPR036812">
    <property type="entry name" value="NADP_OxRdtase_dom_sf"/>
</dbReference>
<dbReference type="PANTHER" id="PTHR43827">
    <property type="entry name" value="2,5-DIKETO-D-GLUCONIC ACID REDUCTASE"/>
    <property type="match status" value="1"/>
</dbReference>
<dbReference type="PANTHER" id="PTHR43827:SF3">
    <property type="entry name" value="NADP-DEPENDENT OXIDOREDUCTASE DOMAIN-CONTAINING PROTEIN"/>
    <property type="match status" value="1"/>
</dbReference>
<dbReference type="Pfam" id="PF00248">
    <property type="entry name" value="Aldo_ket_red"/>
    <property type="match status" value="1"/>
</dbReference>
<dbReference type="PIRSF" id="PIRSF000097">
    <property type="entry name" value="AKR"/>
    <property type="match status" value="1"/>
</dbReference>
<dbReference type="PRINTS" id="PR00069">
    <property type="entry name" value="ALDKETRDTASE"/>
</dbReference>
<dbReference type="SUPFAM" id="SSF51430">
    <property type="entry name" value="NAD(P)-linked oxidoreductase"/>
    <property type="match status" value="1"/>
</dbReference>
<dbReference type="PROSITE" id="PS00798">
    <property type="entry name" value="ALDOKETO_REDUCTASE_1"/>
    <property type="match status" value="1"/>
</dbReference>
<dbReference type="PROSITE" id="PS00062">
    <property type="entry name" value="ALDOKETO_REDUCTASE_2"/>
    <property type="match status" value="1"/>
</dbReference>
<feature type="chain" id="PRO_0000380750" description="Aldo-keto reductase Mvan_2161">
    <location>
        <begin position="1"/>
        <end position="279"/>
    </location>
</feature>
<feature type="active site" description="Proton donor" evidence="2">
    <location>
        <position position="54"/>
    </location>
</feature>
<feature type="binding site" evidence="1">
    <location>
        <position position="194"/>
    </location>
    <ligand>
        <name>NADPH</name>
        <dbReference type="ChEBI" id="CHEBI:57783"/>
    </ligand>
</feature>
<feature type="binding site" evidence="1">
    <location>
        <position position="196"/>
    </location>
    <ligand>
        <name>NADPH</name>
        <dbReference type="ChEBI" id="CHEBI:57783"/>
    </ligand>
</feature>
<feature type="binding site" evidence="1">
    <location>
        <position position="232"/>
    </location>
    <ligand>
        <name>NADPH</name>
        <dbReference type="ChEBI" id="CHEBI:57783"/>
    </ligand>
</feature>
<feature type="binding site" evidence="1">
    <location>
        <position position="234"/>
    </location>
    <ligand>
        <name>NADPH</name>
        <dbReference type="ChEBI" id="CHEBI:57783"/>
    </ligand>
</feature>
<feature type="binding site" evidence="1">
    <location>
        <position position="235"/>
    </location>
    <ligand>
        <name>NADPH</name>
        <dbReference type="ChEBI" id="CHEBI:57783"/>
    </ligand>
</feature>
<feature type="binding site" evidence="1">
    <location>
        <position position="240"/>
    </location>
    <ligand>
        <name>NADPH</name>
        <dbReference type="ChEBI" id="CHEBI:57783"/>
    </ligand>
</feature>
<feature type="binding site" evidence="1">
    <location>
        <position position="243"/>
    </location>
    <ligand>
        <name>NADPH</name>
        <dbReference type="ChEBI" id="CHEBI:57783"/>
    </ligand>
</feature>
<feature type="binding site" evidence="1">
    <location>
        <position position="244"/>
    </location>
    <ligand>
        <name>NADPH</name>
        <dbReference type="ChEBI" id="CHEBI:57783"/>
    </ligand>
</feature>
<feature type="binding site" evidence="1">
    <location>
        <position position="270"/>
    </location>
    <ligand>
        <name>NADPH</name>
        <dbReference type="ChEBI" id="CHEBI:57783"/>
    </ligand>
</feature>
<protein>
    <recommendedName>
        <fullName evidence="1">Aldo-keto reductase Mvan_2161</fullName>
        <ecNumber evidence="1">1.1.1.-</ecNumber>
    </recommendedName>
</protein>
<proteinExistence type="inferred from homology"/>
<comment type="similarity">
    <text evidence="3">Belongs to the aldo/keto reductase family.</text>
</comment>
<gene>
    <name type="ordered locus">Mvan_2161</name>
</gene>
<reference key="1">
    <citation type="submission" date="2006-12" db="EMBL/GenBank/DDBJ databases">
        <title>Complete sequence of Mycobacterium vanbaalenii PYR-1.</title>
        <authorList>
            <consortium name="US DOE Joint Genome Institute"/>
            <person name="Copeland A."/>
            <person name="Lucas S."/>
            <person name="Lapidus A."/>
            <person name="Barry K."/>
            <person name="Detter J.C."/>
            <person name="Glavina del Rio T."/>
            <person name="Hammon N."/>
            <person name="Israni S."/>
            <person name="Dalin E."/>
            <person name="Tice H."/>
            <person name="Pitluck S."/>
            <person name="Singan V."/>
            <person name="Schmutz J."/>
            <person name="Larimer F."/>
            <person name="Land M."/>
            <person name="Hauser L."/>
            <person name="Kyrpides N."/>
            <person name="Anderson I.J."/>
            <person name="Miller C."/>
            <person name="Richardson P."/>
        </authorList>
    </citation>
    <scope>NUCLEOTIDE SEQUENCE [LARGE SCALE GENOMIC DNA]</scope>
    <source>
        <strain>DSM 7251 / JCM 13017 / BCRC 16820 / KCTC 9966 / NRRL B-24157 / PYR-1</strain>
    </source>
</reference>
<evidence type="ECO:0000250" key="1">
    <source>
        <dbReference type="UniProtKB" id="A0QV09"/>
    </source>
</evidence>
<evidence type="ECO:0000250" key="2">
    <source>
        <dbReference type="UniProtKB" id="P80874"/>
    </source>
</evidence>
<evidence type="ECO:0000305" key="3"/>
<sequence length="279" mass="29752">MTSAAAIPTVILNDDNTMPVIGLGVGELSDAEAEQSVLAALEAGYRLIDTAAAYGNEAAVGRAIAKSGVPRGELFVTTKLATDDLGFQSSQDALRASLERLGLDYVDLYLIHWPAGSQGTYVDSWGGLMKLKELGLTRSIGVSNFHAQHLDDIIGLSFFTPAVNQIELHPLLNQAELRAVNAEHGIVTEAYSPLGVGSLLSNPAVTAIADAQDRTPAQVLIRWSLQLGNVVISRSSSPERIKSNLDVFDFELTADQMAALDGLDEGTRFRPDPETYTGS</sequence>